<reference key="1">
    <citation type="journal article" date="1996" name="Plant Physiol.">
        <title>Molecular analysis of a new member of the opium poppy tyrosine/3,4-dihydroxyphenylalanine decarboxylase gene family.</title>
        <authorList>
            <person name="Maldonado-Mendoza I.E."/>
            <person name="Lopez-Meyer M."/>
            <person name="Galef J.R."/>
            <person name="Burnett R.J."/>
            <person name="Nessler C.L."/>
        </authorList>
    </citation>
    <scope>NUCLEOTIDE SEQUENCE [GENOMIC DNA]</scope>
    <source>
        <strain>cv. UNL186</strain>
    </source>
</reference>
<gene>
    <name type="primary">TYDC5</name>
</gene>
<feature type="chain" id="PRO_0000147002" description="Tyrosine/DOPA decarboxylase 5">
    <location>
        <begin position="1"/>
        <end position="523"/>
    </location>
</feature>
<feature type="region of interest" description="Disordered" evidence="2">
    <location>
        <begin position="1"/>
        <end position="20"/>
    </location>
</feature>
<feature type="region of interest" description="Disordered" evidence="2">
    <location>
        <begin position="47"/>
        <end position="66"/>
    </location>
</feature>
<feature type="compositionally biased region" description="Polar residues" evidence="2">
    <location>
        <begin position="1"/>
        <end position="19"/>
    </location>
</feature>
<feature type="modified residue" description="N6-(pyridoxal phosphate)lysine" evidence="1">
    <location>
        <position position="321"/>
    </location>
</feature>
<name>TYDC5_PAPSO</name>
<evidence type="ECO:0000250" key="1"/>
<evidence type="ECO:0000256" key="2">
    <source>
        <dbReference type="SAM" id="MobiDB-lite"/>
    </source>
</evidence>
<evidence type="ECO:0000305" key="3"/>
<comment type="function">
    <text>May play an important role in providing precursors for alkaloid synthesis in the roots and germinating seedlings.</text>
</comment>
<comment type="catalytic activity">
    <reaction>
        <text>L-tyrosine + H(+) = tyramine + CO2</text>
        <dbReference type="Rhea" id="RHEA:14345"/>
        <dbReference type="ChEBI" id="CHEBI:15378"/>
        <dbReference type="ChEBI" id="CHEBI:16526"/>
        <dbReference type="ChEBI" id="CHEBI:58315"/>
        <dbReference type="ChEBI" id="CHEBI:327995"/>
        <dbReference type="EC" id="4.1.1.25"/>
    </reaction>
</comment>
<comment type="catalytic activity">
    <reaction>
        <text>L-dopa + H(+) = dopamine + CO2</text>
        <dbReference type="Rhea" id="RHEA:12272"/>
        <dbReference type="ChEBI" id="CHEBI:15378"/>
        <dbReference type="ChEBI" id="CHEBI:16526"/>
        <dbReference type="ChEBI" id="CHEBI:57504"/>
        <dbReference type="ChEBI" id="CHEBI:59905"/>
        <dbReference type="EC" id="4.1.1.28"/>
    </reaction>
</comment>
<comment type="catalytic activity">
    <reaction>
        <text>5-hydroxy-L-tryptophan + H(+) = serotonin + CO2</text>
        <dbReference type="Rhea" id="RHEA:18533"/>
        <dbReference type="ChEBI" id="CHEBI:15378"/>
        <dbReference type="ChEBI" id="CHEBI:16526"/>
        <dbReference type="ChEBI" id="CHEBI:58266"/>
        <dbReference type="ChEBI" id="CHEBI:350546"/>
        <dbReference type="EC" id="4.1.1.28"/>
    </reaction>
</comment>
<comment type="cofactor">
    <cofactor>
        <name>pyridoxal 5'-phosphate</name>
        <dbReference type="ChEBI" id="CHEBI:597326"/>
    </cofactor>
</comment>
<comment type="subunit">
    <text evidence="1">Homodimer.</text>
</comment>
<comment type="tissue specificity">
    <text>Roots.</text>
</comment>
<comment type="similarity">
    <text evidence="3">Belongs to the group II decarboxylase family.</text>
</comment>
<protein>
    <recommendedName>
        <fullName>Tyrosine/DOPA decarboxylase 5</fullName>
    </recommendedName>
    <domain>
        <recommendedName>
            <fullName>DOPA decarboxylase</fullName>
            <shortName>DDC</shortName>
            <ecNumber>4.1.1.28</ecNumber>
        </recommendedName>
    </domain>
    <domain>
        <recommendedName>
            <fullName>Tyrosine decarboxylase</fullName>
            <ecNumber>4.1.1.25</ecNumber>
        </recommendedName>
    </domain>
</protein>
<organism>
    <name type="scientific">Papaver somniferum</name>
    <name type="common">Opium poppy</name>
    <dbReference type="NCBI Taxonomy" id="3469"/>
    <lineage>
        <taxon>Eukaryota</taxon>
        <taxon>Viridiplantae</taxon>
        <taxon>Streptophyta</taxon>
        <taxon>Embryophyta</taxon>
        <taxon>Tracheophyta</taxon>
        <taxon>Spermatophyta</taxon>
        <taxon>Magnoliopsida</taxon>
        <taxon>Ranunculales</taxon>
        <taxon>Papaveraceae</taxon>
        <taxon>Papaveroideae</taxon>
        <taxon>Papaver</taxon>
    </lineage>
</organism>
<proteinExistence type="evidence at transcript level"/>
<accession>P54771</accession>
<dbReference type="EC" id="4.1.1.28"/>
<dbReference type="EC" id="4.1.1.25"/>
<dbReference type="EMBL" id="U16804">
    <property type="protein sequence ID" value="AAA97535.1"/>
    <property type="molecule type" value="Genomic_DNA"/>
</dbReference>
<dbReference type="PIR" id="T09615">
    <property type="entry name" value="T09615"/>
</dbReference>
<dbReference type="SMR" id="P54771"/>
<dbReference type="GO" id="GO:0005737">
    <property type="term" value="C:cytoplasm"/>
    <property type="evidence" value="ECO:0007669"/>
    <property type="project" value="TreeGrafter"/>
</dbReference>
<dbReference type="GO" id="GO:0036467">
    <property type="term" value="F:5-hydroxy-L-tryptophan decarboxylase activity"/>
    <property type="evidence" value="ECO:0007669"/>
    <property type="project" value="RHEA"/>
</dbReference>
<dbReference type="GO" id="GO:0036468">
    <property type="term" value="F:L-dopa decarboxylase activity"/>
    <property type="evidence" value="ECO:0007669"/>
    <property type="project" value="RHEA"/>
</dbReference>
<dbReference type="GO" id="GO:0030170">
    <property type="term" value="F:pyridoxal phosphate binding"/>
    <property type="evidence" value="ECO:0007669"/>
    <property type="project" value="InterPro"/>
</dbReference>
<dbReference type="GO" id="GO:0004837">
    <property type="term" value="F:tyrosine decarboxylase activity"/>
    <property type="evidence" value="ECO:0007669"/>
    <property type="project" value="UniProtKB-EC"/>
</dbReference>
<dbReference type="GO" id="GO:0006520">
    <property type="term" value="P:amino acid metabolic process"/>
    <property type="evidence" value="ECO:0007669"/>
    <property type="project" value="InterPro"/>
</dbReference>
<dbReference type="GO" id="GO:0019752">
    <property type="term" value="P:carboxylic acid metabolic process"/>
    <property type="evidence" value="ECO:0007669"/>
    <property type="project" value="InterPro"/>
</dbReference>
<dbReference type="CDD" id="cd06450">
    <property type="entry name" value="DOPA_deC_like"/>
    <property type="match status" value="1"/>
</dbReference>
<dbReference type="FunFam" id="3.40.640.10:FF:000025">
    <property type="entry name" value="Histidine decarboxylase"/>
    <property type="match status" value="1"/>
</dbReference>
<dbReference type="Gene3D" id="3.90.1150.10">
    <property type="entry name" value="Aspartate Aminotransferase, domain 1"/>
    <property type="match status" value="1"/>
</dbReference>
<dbReference type="Gene3D" id="1.20.1340.10">
    <property type="entry name" value="dopa decarboxylase, N-terminal domain"/>
    <property type="match status" value="1"/>
</dbReference>
<dbReference type="Gene3D" id="3.40.640.10">
    <property type="entry name" value="Type I PLP-dependent aspartate aminotransferase-like (Major domain)"/>
    <property type="match status" value="1"/>
</dbReference>
<dbReference type="InterPro" id="IPR010977">
    <property type="entry name" value="Aromatic_deC"/>
</dbReference>
<dbReference type="InterPro" id="IPR002129">
    <property type="entry name" value="PyrdxlP-dep_de-COase"/>
</dbReference>
<dbReference type="InterPro" id="IPR015424">
    <property type="entry name" value="PyrdxlP-dep_Trfase"/>
</dbReference>
<dbReference type="InterPro" id="IPR015421">
    <property type="entry name" value="PyrdxlP-dep_Trfase_major"/>
</dbReference>
<dbReference type="InterPro" id="IPR015422">
    <property type="entry name" value="PyrdxlP-dep_Trfase_small"/>
</dbReference>
<dbReference type="InterPro" id="IPR021115">
    <property type="entry name" value="Pyridoxal-P_BS"/>
</dbReference>
<dbReference type="PANTHER" id="PTHR11999">
    <property type="entry name" value="GROUP II PYRIDOXAL-5-PHOSPHATE DECARBOXYLASE"/>
    <property type="match status" value="1"/>
</dbReference>
<dbReference type="PANTHER" id="PTHR11999:SF96">
    <property type="entry name" value="TYROSINE DECARBOXYLASE"/>
    <property type="match status" value="1"/>
</dbReference>
<dbReference type="Pfam" id="PF00282">
    <property type="entry name" value="Pyridoxal_deC"/>
    <property type="match status" value="1"/>
</dbReference>
<dbReference type="PRINTS" id="PR00800">
    <property type="entry name" value="YHDCRBOXLASE"/>
</dbReference>
<dbReference type="SUPFAM" id="SSF53383">
    <property type="entry name" value="PLP-dependent transferases"/>
    <property type="match status" value="1"/>
</dbReference>
<dbReference type="PROSITE" id="PS00392">
    <property type="entry name" value="DDC_GAD_HDC_YDC"/>
    <property type="match status" value="1"/>
</dbReference>
<keyword id="KW-0210">Decarboxylase</keyword>
<keyword id="KW-0456">Lyase</keyword>
<keyword id="KW-0663">Pyridoxal phosphate</keyword>
<sequence>MGSLPTDNLESMSICSQNPLDPDEFRRQGHMIIDFLADYYKNVKVSSRSQANPGSQQTLPETAPNHSESIETILQDVQNDIIPGITHWQSPNYFAYFPSSGSVAGFLGEMLSSGFNVVGFNWMSSPAATELESIVMNWLGQMLNLPKSFLFSSDDNAGSSGGGVLQGTTCEAILCTLTASRDKMLNKIGRENINKLVVYASDQTHCALQKAAQIAGINPKNFRAIATSKATDFGLSPQALLSTILADIESGLVPLFLCATVGTTSSTAVDPIGPLCEVAKQFGIWVHVDAAYAGSACICPEFRHFIDGVEEADSFSLNAHKWFFTTLDCCCLWVKDSNALVKALSTSPEYLKNKATDSKQVIDYKDWQIALSRRFRSMKLWLVLRSYGVANLRSFLRSHVKMAKHFDGLIAMDKRFEIVVPNTFAMVCFRLKPAAIFNGKLGENGVDYNCIEEKTNEINSKLLESVNASGSIYMTHAVVGGVYMIRFAVGATLTEERHVSMAWKVIQEHTDAILGTVDDSVVA</sequence>